<keyword id="KW-0002">3D-structure</keyword>
<keyword id="KW-0496">Mitochondrion</keyword>
<keyword id="KW-1185">Reference proteome</keyword>
<keyword id="KW-0687">Ribonucleoprotein</keyword>
<keyword id="KW-0689">Ribosomal protein</keyword>
<name>RT08_YEAST</name>
<proteinExistence type="evidence at protein level"/>
<protein>
    <recommendedName>
        <fullName evidence="5">Small ribosomal subunit protein uS8m</fullName>
    </recommendedName>
    <alternativeName>
        <fullName>37S ribosomal protein S8, mitochondrial</fullName>
    </alternativeName>
</protein>
<organism>
    <name type="scientific">Saccharomyces cerevisiae (strain ATCC 204508 / S288c)</name>
    <name type="common">Baker's yeast</name>
    <dbReference type="NCBI Taxonomy" id="559292"/>
    <lineage>
        <taxon>Eukaryota</taxon>
        <taxon>Fungi</taxon>
        <taxon>Dikarya</taxon>
        <taxon>Ascomycota</taxon>
        <taxon>Saccharomycotina</taxon>
        <taxon>Saccharomycetes</taxon>
        <taxon>Saccharomycetales</taxon>
        <taxon>Saccharomycetaceae</taxon>
        <taxon>Saccharomyces</taxon>
    </lineage>
</organism>
<sequence>MSLVKLANTCAHLQNCSKVRVALTSIPYTKLQLQFAYNLYQQGFLSSLQKGSTMGPDKDFVEVTPDNISTRRLWVGLKYRDNKPVLSSCKLISKPNSRIHLPMEDMKKLCSGVTIRNIKPLQPGELILVRAHNNIMDINEAISKKLDGEVLCRVK</sequence>
<feature type="chain" id="PRO_0000126599" description="Small ribosomal subunit protein uS8m">
    <location>
        <begin position="1"/>
        <end position="155"/>
    </location>
</feature>
<feature type="helix" evidence="10">
    <location>
        <begin position="3"/>
        <end position="19"/>
    </location>
</feature>
<feature type="strand" evidence="10">
    <location>
        <begin position="21"/>
        <end position="27"/>
    </location>
</feature>
<feature type="helix" evidence="10">
    <location>
        <begin position="30"/>
        <end position="41"/>
    </location>
</feature>
<feature type="strand" evidence="10">
    <location>
        <begin position="44"/>
        <end position="56"/>
    </location>
</feature>
<feature type="turn" evidence="10">
    <location>
        <begin position="65"/>
        <end position="67"/>
    </location>
</feature>
<feature type="helix" evidence="10">
    <location>
        <begin position="68"/>
        <end position="70"/>
    </location>
</feature>
<feature type="strand" evidence="10">
    <location>
        <begin position="71"/>
        <end position="77"/>
    </location>
</feature>
<feature type="strand" evidence="10">
    <location>
        <begin position="83"/>
        <end position="85"/>
    </location>
</feature>
<feature type="strand" evidence="10">
    <location>
        <begin position="89"/>
        <end position="94"/>
    </location>
</feature>
<feature type="strand" evidence="9">
    <location>
        <begin position="95"/>
        <end position="97"/>
    </location>
</feature>
<feature type="helix" evidence="10">
    <location>
        <begin position="103"/>
        <end position="110"/>
    </location>
</feature>
<feature type="strand" evidence="10">
    <location>
        <begin position="126"/>
        <end position="131"/>
    </location>
</feature>
<feature type="strand" evidence="10">
    <location>
        <begin position="134"/>
        <end position="137"/>
    </location>
</feature>
<feature type="helix" evidence="10">
    <location>
        <begin position="138"/>
        <end position="143"/>
    </location>
</feature>
<feature type="strand" evidence="10">
    <location>
        <begin position="148"/>
        <end position="154"/>
    </location>
</feature>
<dbReference type="EMBL" id="Z49705">
    <property type="protein sequence ID" value="CAA89794.1"/>
    <property type="molecule type" value="Genomic_DNA"/>
</dbReference>
<dbReference type="EMBL" id="AY558414">
    <property type="protein sequence ID" value="AAS56740.1"/>
    <property type="molecule type" value="Genomic_DNA"/>
</dbReference>
<dbReference type="EMBL" id="BK006946">
    <property type="protein sequence ID" value="DAA10053.1"/>
    <property type="molecule type" value="Genomic_DNA"/>
</dbReference>
<dbReference type="PIR" id="S54516">
    <property type="entry name" value="S54516"/>
</dbReference>
<dbReference type="RefSeq" id="NP_013879.1">
    <property type="nucleotide sequence ID" value="NM_001182661.1"/>
</dbReference>
<dbReference type="PDB" id="5MRC">
    <property type="method" value="EM"/>
    <property type="resolution" value="3.25 A"/>
    <property type="chains" value="HH=2-155"/>
</dbReference>
<dbReference type="PDB" id="5MRE">
    <property type="method" value="EM"/>
    <property type="resolution" value="3.75 A"/>
    <property type="chains" value="HH=2-155"/>
</dbReference>
<dbReference type="PDB" id="5MRF">
    <property type="method" value="EM"/>
    <property type="resolution" value="4.97 A"/>
    <property type="chains" value="HH=2-155"/>
</dbReference>
<dbReference type="PDB" id="8D8J">
    <property type="method" value="EM"/>
    <property type="resolution" value="3.80 A"/>
    <property type="chains" value="H=1-155"/>
</dbReference>
<dbReference type="PDB" id="8D8K">
    <property type="method" value="EM"/>
    <property type="resolution" value="3.13 A"/>
    <property type="chains" value="H=1-155"/>
</dbReference>
<dbReference type="PDB" id="8D8L">
    <property type="method" value="EM"/>
    <property type="resolution" value="2.60 A"/>
    <property type="chains" value="H=1-155"/>
</dbReference>
<dbReference type="PDB" id="8OM2">
    <property type="method" value="EM"/>
    <property type="resolution" value="2.57 A"/>
    <property type="chains" value="H=2-155"/>
</dbReference>
<dbReference type="PDB" id="8OM3">
    <property type="method" value="EM"/>
    <property type="resolution" value="2.87 A"/>
    <property type="chains" value="H=2-155"/>
</dbReference>
<dbReference type="PDB" id="8OM4">
    <property type="method" value="EM"/>
    <property type="resolution" value="2.32 A"/>
    <property type="chains" value="H=2-155"/>
</dbReference>
<dbReference type="PDBsum" id="5MRC"/>
<dbReference type="PDBsum" id="5MRE"/>
<dbReference type="PDBsum" id="5MRF"/>
<dbReference type="PDBsum" id="8D8J"/>
<dbReference type="PDBsum" id="8D8K"/>
<dbReference type="PDBsum" id="8D8L"/>
<dbReference type="PDBsum" id="8OM2"/>
<dbReference type="PDBsum" id="8OM3"/>
<dbReference type="PDBsum" id="8OM4"/>
<dbReference type="EMDB" id="EMD-16966"/>
<dbReference type="EMDB" id="EMD-16967"/>
<dbReference type="EMDB" id="EMD-16968"/>
<dbReference type="EMDB" id="EMD-27249"/>
<dbReference type="EMDB" id="EMD-27250"/>
<dbReference type="EMDB" id="EMD-27251"/>
<dbReference type="EMDB" id="EMD-3551"/>
<dbReference type="EMDB" id="EMD-3552"/>
<dbReference type="EMDB" id="EMD-3553"/>
<dbReference type="SMR" id="Q03799"/>
<dbReference type="BioGRID" id="35333">
    <property type="interactions" value="71"/>
</dbReference>
<dbReference type="ComplexPortal" id="CPX-1603">
    <property type="entry name" value="37S mitochondrial small ribosomal subunit"/>
</dbReference>
<dbReference type="DIP" id="DIP-6673N"/>
<dbReference type="FunCoup" id="Q03799">
    <property type="interactions" value="133"/>
</dbReference>
<dbReference type="IntAct" id="Q03799">
    <property type="interactions" value="34"/>
</dbReference>
<dbReference type="MINT" id="Q03799"/>
<dbReference type="STRING" id="4932.YMR158W"/>
<dbReference type="PaxDb" id="4932-YMR158W"/>
<dbReference type="PeptideAtlas" id="Q03799"/>
<dbReference type="EnsemblFungi" id="YMR158W_mRNA">
    <property type="protein sequence ID" value="YMR158W"/>
    <property type="gene ID" value="YMR158W"/>
</dbReference>
<dbReference type="GeneID" id="855190"/>
<dbReference type="KEGG" id="sce:YMR158W"/>
<dbReference type="AGR" id="SGD:S000004767"/>
<dbReference type="SGD" id="S000004767">
    <property type="gene designation" value="MRPS8"/>
</dbReference>
<dbReference type="VEuPathDB" id="FungiDB:YMR158W"/>
<dbReference type="eggNOG" id="ENOG502RXRN">
    <property type="taxonomic scope" value="Eukaryota"/>
</dbReference>
<dbReference type="GeneTree" id="ENSGT00950000183198"/>
<dbReference type="HOGENOM" id="CLU_107213_0_0_1"/>
<dbReference type="InParanoid" id="Q03799"/>
<dbReference type="OMA" id="KYWQNEP"/>
<dbReference type="OrthoDB" id="409928at2759"/>
<dbReference type="BioCyc" id="YEAST:G3O-32848-MONOMER"/>
<dbReference type="BioGRID-ORCS" id="855190">
    <property type="hits" value="0 hits in 10 CRISPR screens"/>
</dbReference>
<dbReference type="PRO" id="PR:Q03799"/>
<dbReference type="Proteomes" id="UP000002311">
    <property type="component" value="Chromosome XIII"/>
</dbReference>
<dbReference type="RNAct" id="Q03799">
    <property type="molecule type" value="protein"/>
</dbReference>
<dbReference type="GO" id="GO:0005743">
    <property type="term" value="C:mitochondrial inner membrane"/>
    <property type="evidence" value="ECO:0000303"/>
    <property type="project" value="ComplexPortal"/>
</dbReference>
<dbReference type="GO" id="GO:0005763">
    <property type="term" value="C:mitochondrial small ribosomal subunit"/>
    <property type="evidence" value="ECO:0000314"/>
    <property type="project" value="SGD"/>
</dbReference>
<dbReference type="GO" id="GO:0005739">
    <property type="term" value="C:mitochondrion"/>
    <property type="evidence" value="ECO:0007005"/>
    <property type="project" value="SGD"/>
</dbReference>
<dbReference type="GO" id="GO:0003735">
    <property type="term" value="F:structural constituent of ribosome"/>
    <property type="evidence" value="ECO:0000314"/>
    <property type="project" value="SGD"/>
</dbReference>
<dbReference type="GO" id="GO:0032543">
    <property type="term" value="P:mitochondrial translation"/>
    <property type="evidence" value="ECO:0000303"/>
    <property type="project" value="ComplexPortal"/>
</dbReference>
<dbReference type="FunFam" id="3.30.1370.30:FF:000006">
    <property type="entry name" value="40S ribosomal protein S8"/>
    <property type="match status" value="1"/>
</dbReference>
<dbReference type="FunFam" id="3.30.1490.10:FF:000005">
    <property type="entry name" value="Mitochondrial 40S ribosomal protein S8"/>
    <property type="match status" value="1"/>
</dbReference>
<dbReference type="Gene3D" id="3.30.1370.30">
    <property type="match status" value="1"/>
</dbReference>
<dbReference type="Gene3D" id="3.30.1490.10">
    <property type="match status" value="1"/>
</dbReference>
<dbReference type="InterPro" id="IPR000630">
    <property type="entry name" value="Ribosomal_uS8"/>
</dbReference>
<dbReference type="InterPro" id="IPR035987">
    <property type="entry name" value="Ribosomal_uS8_sf"/>
</dbReference>
<dbReference type="PANTHER" id="PTHR11758">
    <property type="entry name" value="40S RIBOSOMAL PROTEIN S15A"/>
    <property type="match status" value="1"/>
</dbReference>
<dbReference type="Pfam" id="PF00410">
    <property type="entry name" value="Ribosomal_S8"/>
    <property type="match status" value="1"/>
</dbReference>
<dbReference type="SUPFAM" id="SSF56047">
    <property type="entry name" value="Ribosomal protein S8"/>
    <property type="match status" value="1"/>
</dbReference>
<reference key="1">
    <citation type="journal article" date="1997" name="Nature">
        <title>The nucleotide sequence of Saccharomyces cerevisiae chromosome XIII.</title>
        <authorList>
            <person name="Bowman S."/>
            <person name="Churcher C.M."/>
            <person name="Badcock K."/>
            <person name="Brown D."/>
            <person name="Chillingworth T."/>
            <person name="Connor R."/>
            <person name="Dedman K."/>
            <person name="Devlin K."/>
            <person name="Gentles S."/>
            <person name="Hamlin N."/>
            <person name="Hunt S."/>
            <person name="Jagels K."/>
            <person name="Lye G."/>
            <person name="Moule S."/>
            <person name="Odell C."/>
            <person name="Pearson D."/>
            <person name="Rajandream M.A."/>
            <person name="Rice P."/>
            <person name="Skelton J."/>
            <person name="Walsh S.V."/>
            <person name="Whitehead S."/>
            <person name="Barrell B.G."/>
        </authorList>
    </citation>
    <scope>NUCLEOTIDE SEQUENCE [LARGE SCALE GENOMIC DNA]</scope>
    <source>
        <strain>ATCC 204508 / S288c</strain>
    </source>
</reference>
<reference key="2">
    <citation type="journal article" date="2014" name="G3 (Bethesda)">
        <title>The reference genome sequence of Saccharomyces cerevisiae: Then and now.</title>
        <authorList>
            <person name="Engel S.R."/>
            <person name="Dietrich F.S."/>
            <person name="Fisk D.G."/>
            <person name="Binkley G."/>
            <person name="Balakrishnan R."/>
            <person name="Costanzo M.C."/>
            <person name="Dwight S.S."/>
            <person name="Hitz B.C."/>
            <person name="Karra K."/>
            <person name="Nash R.S."/>
            <person name="Weng S."/>
            <person name="Wong E.D."/>
            <person name="Lloyd P."/>
            <person name="Skrzypek M.S."/>
            <person name="Miyasato S.R."/>
            <person name="Simison M."/>
            <person name="Cherry J.M."/>
        </authorList>
    </citation>
    <scope>GENOME REANNOTATION</scope>
    <source>
        <strain>ATCC 204508 / S288c</strain>
    </source>
</reference>
<reference key="3">
    <citation type="journal article" date="2007" name="Genome Res.">
        <title>Approaching a complete repository of sequence-verified protein-encoding clones for Saccharomyces cerevisiae.</title>
        <authorList>
            <person name="Hu Y."/>
            <person name="Rolfs A."/>
            <person name="Bhullar B."/>
            <person name="Murthy T.V.S."/>
            <person name="Zhu C."/>
            <person name="Berger M.F."/>
            <person name="Camargo A.A."/>
            <person name="Kelley F."/>
            <person name="McCarron S."/>
            <person name="Jepson D."/>
            <person name="Richardson A."/>
            <person name="Raphael J."/>
            <person name="Moreira D."/>
            <person name="Taycher E."/>
            <person name="Zuo D."/>
            <person name="Mohr S."/>
            <person name="Kane M.F."/>
            <person name="Williamson J."/>
            <person name="Simpson A.J.G."/>
            <person name="Bulyk M.L."/>
            <person name="Harlow E."/>
            <person name="Marsischky G."/>
            <person name="Kolodner R.D."/>
            <person name="LaBaer J."/>
        </authorList>
    </citation>
    <scope>NUCLEOTIDE SEQUENCE [GENOMIC DNA]</scope>
    <source>
        <strain>ATCC 204508 / S288c</strain>
    </source>
</reference>
<reference key="4">
    <citation type="journal article" date="2002" name="Eur. J. Biochem.">
        <title>Tag-mediated isolation of yeast mitochondrial ribosome and mass spectrometric identification of its new components.</title>
        <authorList>
            <person name="Gan X."/>
            <person name="Kitakawa M."/>
            <person name="Yoshino K."/>
            <person name="Oshiro N."/>
            <person name="Yonezawa K."/>
            <person name="Isono K."/>
        </authorList>
    </citation>
    <scope>IDENTIFICATION IN THE MITOCHONDRIAL RIBOSOMAL SMALL COMPLEX</scope>
    <scope>IDENTIFICATION BY MASS SPECTROMETRY</scope>
</reference>
<reference key="5">
    <citation type="journal article" date="2003" name="Proc. Natl. Acad. Sci. U.S.A.">
        <title>The proteome of Saccharomyces cerevisiae mitochondria.</title>
        <authorList>
            <person name="Sickmann A."/>
            <person name="Reinders J."/>
            <person name="Wagner Y."/>
            <person name="Joppich C."/>
            <person name="Zahedi R.P."/>
            <person name="Meyer H.E."/>
            <person name="Schoenfisch B."/>
            <person name="Perschil I."/>
            <person name="Chacinska A."/>
            <person name="Guiard B."/>
            <person name="Rehling P."/>
            <person name="Pfanner N."/>
            <person name="Meisinger C."/>
        </authorList>
    </citation>
    <scope>SUBCELLULAR LOCATION [LARGE SCALE ANALYSIS]</scope>
    <source>
        <strain>ATCC 76625 / YPH499</strain>
    </source>
</reference>
<reference key="6">
    <citation type="journal article" date="2015" name="Nat. Commun.">
        <title>Organization of the mitochondrial translation machinery studied in situ by cryoelectron tomography.</title>
        <authorList>
            <person name="Pfeffer S."/>
            <person name="Woellhaf M.W."/>
            <person name="Herrmann J.M."/>
            <person name="Forster F."/>
        </authorList>
    </citation>
    <scope>SUBCELLULAR LOCATION</scope>
</reference>
<reference key="7">
    <citation type="journal article" date="2017" name="Science">
        <title>The structure of the yeast mitochondrial ribosome.</title>
        <authorList>
            <person name="Desai N."/>
            <person name="Brown A."/>
            <person name="Amunts A."/>
            <person name="Ramakrishnan V."/>
        </authorList>
    </citation>
    <scope>STRUCTURE BY ELECTRON MICROSCOPY (3.25 ANGSTROMS)</scope>
    <scope>SUBUNIT</scope>
</reference>
<accession>Q03799</accession>
<accession>D6VZX9</accession>
<comment type="function">
    <text evidence="7 8">Component of the mitochondrial ribosome (mitoribosome), a dedicated translation machinery responsible for the synthesis of mitochondrial genome-encoded proteins, including at least some of the essential transmembrane subunits of the mitochondrial respiratory chain. The mitoribosomes are attached to the mitochondrial inner membrane and translation products are cotranslationally integrated into the membrane.</text>
</comment>
<comment type="subunit">
    <text evidence="1 4">Component of the mitochondrial small ribosomal subunit (mt-SSU). Mature yeast 74S mitochondrial ribosomes consist of a small (37S) and a large (54S) subunit. The 37S small subunit contains a 15S ribosomal RNA (15S mt-rRNA) and 34 different proteins. The 54S large subunit contains a 21S rRNA (21S mt-rRNA) and 46 different proteins.</text>
</comment>
<comment type="subcellular location">
    <subcellularLocation>
        <location evidence="2">Mitochondrion</location>
    </subcellularLocation>
    <text evidence="3">Mitoribosomes are tethered to the mitochondrial inner membrane and spatially aligned with the membrane insertion machinery through two distinct membrane contact sites, formed by the 21S rRNA expansion segment 96-ES1 and the inner membrane protein MBA1.</text>
</comment>
<comment type="similarity">
    <text evidence="6">Belongs to the universal ribosomal protein uS8 family.</text>
</comment>
<evidence type="ECO:0000269" key="1">
    <source>
    </source>
</evidence>
<evidence type="ECO:0000269" key="2">
    <source>
    </source>
</evidence>
<evidence type="ECO:0000269" key="3">
    <source>
    </source>
</evidence>
<evidence type="ECO:0000269" key="4">
    <source>
    </source>
</evidence>
<evidence type="ECO:0000303" key="5">
    <source>
    </source>
</evidence>
<evidence type="ECO:0000305" key="6"/>
<evidence type="ECO:0000305" key="7">
    <source>
    </source>
</evidence>
<evidence type="ECO:0000305" key="8">
    <source>
    </source>
</evidence>
<evidence type="ECO:0007829" key="9">
    <source>
        <dbReference type="PDB" id="8D8K"/>
    </source>
</evidence>
<evidence type="ECO:0007829" key="10">
    <source>
        <dbReference type="PDB" id="8D8L"/>
    </source>
</evidence>
<gene>
    <name type="primary">MRPS8</name>
    <name type="ordered locus">YMR158W</name>
    <name type="ORF">YM8520.07</name>
</gene>